<dbReference type="EC" id="7.4.2.11" evidence="1"/>
<dbReference type="EMBL" id="CR931997">
    <property type="protein sequence ID" value="CAI37888.1"/>
    <property type="molecule type" value="Genomic_DNA"/>
</dbReference>
<dbReference type="RefSeq" id="WP_011274079.1">
    <property type="nucleotide sequence ID" value="NC_007164.1"/>
</dbReference>
<dbReference type="SMR" id="Q4JTG9"/>
<dbReference type="STRING" id="306537.jk1711"/>
<dbReference type="KEGG" id="cjk:jk1711"/>
<dbReference type="eggNOG" id="COG1135">
    <property type="taxonomic scope" value="Bacteria"/>
</dbReference>
<dbReference type="HOGENOM" id="CLU_000604_1_3_11"/>
<dbReference type="OrthoDB" id="4398079at2"/>
<dbReference type="Proteomes" id="UP000000545">
    <property type="component" value="Chromosome"/>
</dbReference>
<dbReference type="GO" id="GO:0005886">
    <property type="term" value="C:plasma membrane"/>
    <property type="evidence" value="ECO:0007669"/>
    <property type="project" value="UniProtKB-SubCell"/>
</dbReference>
<dbReference type="GO" id="GO:0033232">
    <property type="term" value="F:ABC-type D-methionine transporter activity"/>
    <property type="evidence" value="ECO:0007669"/>
    <property type="project" value="UniProtKB-EC"/>
</dbReference>
<dbReference type="GO" id="GO:0005524">
    <property type="term" value="F:ATP binding"/>
    <property type="evidence" value="ECO:0007669"/>
    <property type="project" value="UniProtKB-KW"/>
</dbReference>
<dbReference type="GO" id="GO:0016887">
    <property type="term" value="F:ATP hydrolysis activity"/>
    <property type="evidence" value="ECO:0007669"/>
    <property type="project" value="InterPro"/>
</dbReference>
<dbReference type="CDD" id="cd03258">
    <property type="entry name" value="ABC_MetN_methionine_transporter"/>
    <property type="match status" value="1"/>
</dbReference>
<dbReference type="FunFam" id="3.40.50.300:FF:000056">
    <property type="entry name" value="Cell division ATP-binding protein FtsE"/>
    <property type="match status" value="1"/>
</dbReference>
<dbReference type="Gene3D" id="3.30.70.260">
    <property type="match status" value="1"/>
</dbReference>
<dbReference type="Gene3D" id="3.40.50.300">
    <property type="entry name" value="P-loop containing nucleotide triphosphate hydrolases"/>
    <property type="match status" value="1"/>
</dbReference>
<dbReference type="InterPro" id="IPR003593">
    <property type="entry name" value="AAA+_ATPase"/>
</dbReference>
<dbReference type="InterPro" id="IPR003439">
    <property type="entry name" value="ABC_transporter-like_ATP-bd"/>
</dbReference>
<dbReference type="InterPro" id="IPR017871">
    <property type="entry name" value="ABC_transporter-like_CS"/>
</dbReference>
<dbReference type="InterPro" id="IPR045865">
    <property type="entry name" value="ACT-like_dom_sf"/>
</dbReference>
<dbReference type="InterPro" id="IPR041701">
    <property type="entry name" value="MetN_ABC"/>
</dbReference>
<dbReference type="InterPro" id="IPR050086">
    <property type="entry name" value="MetN_ABC_transporter-like"/>
</dbReference>
<dbReference type="InterPro" id="IPR018449">
    <property type="entry name" value="NIL_domain"/>
</dbReference>
<dbReference type="InterPro" id="IPR027417">
    <property type="entry name" value="P-loop_NTPase"/>
</dbReference>
<dbReference type="PANTHER" id="PTHR43166">
    <property type="entry name" value="AMINO ACID IMPORT ATP-BINDING PROTEIN"/>
    <property type="match status" value="1"/>
</dbReference>
<dbReference type="PANTHER" id="PTHR43166:SF30">
    <property type="entry name" value="METHIONINE IMPORT ATP-BINDING PROTEIN METN"/>
    <property type="match status" value="1"/>
</dbReference>
<dbReference type="Pfam" id="PF00005">
    <property type="entry name" value="ABC_tran"/>
    <property type="match status" value="1"/>
</dbReference>
<dbReference type="Pfam" id="PF09383">
    <property type="entry name" value="NIL"/>
    <property type="match status" value="1"/>
</dbReference>
<dbReference type="SMART" id="SM00382">
    <property type="entry name" value="AAA"/>
    <property type="match status" value="1"/>
</dbReference>
<dbReference type="SMART" id="SM00930">
    <property type="entry name" value="NIL"/>
    <property type="match status" value="1"/>
</dbReference>
<dbReference type="SUPFAM" id="SSF55021">
    <property type="entry name" value="ACT-like"/>
    <property type="match status" value="1"/>
</dbReference>
<dbReference type="SUPFAM" id="SSF52540">
    <property type="entry name" value="P-loop containing nucleoside triphosphate hydrolases"/>
    <property type="match status" value="1"/>
</dbReference>
<dbReference type="PROSITE" id="PS00211">
    <property type="entry name" value="ABC_TRANSPORTER_1"/>
    <property type="match status" value="1"/>
</dbReference>
<dbReference type="PROSITE" id="PS50893">
    <property type="entry name" value="ABC_TRANSPORTER_2"/>
    <property type="match status" value="1"/>
</dbReference>
<dbReference type="PROSITE" id="PS51264">
    <property type="entry name" value="METN"/>
    <property type="match status" value="1"/>
</dbReference>
<reference key="1">
    <citation type="journal article" date="2005" name="J. Bacteriol.">
        <title>Complete genome sequence and analysis of the multiresistant nosocomial pathogen Corynebacterium jeikeium K411, a lipid-requiring bacterium of the human skin flora.</title>
        <authorList>
            <person name="Tauch A."/>
            <person name="Kaiser O."/>
            <person name="Hain T."/>
            <person name="Goesmann A."/>
            <person name="Weisshaar B."/>
            <person name="Albersmeier A."/>
            <person name="Bekel T."/>
            <person name="Bischoff N."/>
            <person name="Brune I."/>
            <person name="Chakraborty T."/>
            <person name="Kalinowski J."/>
            <person name="Meyer F."/>
            <person name="Rupp O."/>
            <person name="Schneiker S."/>
            <person name="Viehoever P."/>
            <person name="Puehler A."/>
        </authorList>
    </citation>
    <scope>NUCLEOTIDE SEQUENCE [LARGE SCALE GENOMIC DNA]</scope>
    <source>
        <strain>K411</strain>
    </source>
</reference>
<proteinExistence type="inferred from homology"/>
<sequence length="368" mass="39759">MASDAQPSVDQPSAGTPGATGNSTGTTGTEIVFRDVTKIFKQGKKEIHALQDINTQIPAGSIVGIIGYSGAGKSTLVRQINGLDRPTSGQILLDGQDIVPLPESQMRKLRSDIGMIFQQFNLFSSRNVAGNVAYPLRLQGMPKQQREERVKELLEFVGLSDKGKAYPEQLSGGQKQRVGIARALATNPSLLLADEATSALDPSTTRDVLELLRKVNRELGITIVVITHEMEVVRSIADSVIVMESGRIVEQGSVYEVFSNPQTKTAANFVATSLRNTPDMVEAEALQSENGRLFTVTMAEGIGFFDAISKLSAAGVTVNIVHGGVTTLQNHSFGRLTLRLTAHSTDGEKAIEEFHSHMQDSTEIEEIR</sequence>
<keyword id="KW-0029">Amino-acid transport</keyword>
<keyword id="KW-0067">ATP-binding</keyword>
<keyword id="KW-1003">Cell membrane</keyword>
<keyword id="KW-0472">Membrane</keyword>
<keyword id="KW-0547">Nucleotide-binding</keyword>
<keyword id="KW-1185">Reference proteome</keyword>
<keyword id="KW-1278">Translocase</keyword>
<keyword id="KW-0813">Transport</keyword>
<gene>
    <name evidence="1" type="primary">metN</name>
    <name type="ordered locus">jk1711</name>
</gene>
<protein>
    <recommendedName>
        <fullName evidence="1">Methionine import ATP-binding protein MetN</fullName>
        <ecNumber evidence="1">7.4.2.11</ecNumber>
    </recommendedName>
</protein>
<feature type="chain" id="PRO_0000270289" description="Methionine import ATP-binding protein MetN">
    <location>
        <begin position="1"/>
        <end position="368"/>
    </location>
</feature>
<feature type="domain" description="ABC transporter" evidence="1">
    <location>
        <begin position="31"/>
        <end position="270"/>
    </location>
</feature>
<feature type="region of interest" description="Disordered" evidence="2">
    <location>
        <begin position="1"/>
        <end position="27"/>
    </location>
</feature>
<feature type="compositionally biased region" description="Polar residues" evidence="2">
    <location>
        <begin position="1"/>
        <end position="14"/>
    </location>
</feature>
<feature type="compositionally biased region" description="Low complexity" evidence="2">
    <location>
        <begin position="15"/>
        <end position="27"/>
    </location>
</feature>
<feature type="binding site" evidence="1">
    <location>
        <begin position="67"/>
        <end position="74"/>
    </location>
    <ligand>
        <name>ATP</name>
        <dbReference type="ChEBI" id="CHEBI:30616"/>
    </ligand>
</feature>
<comment type="function">
    <text evidence="1">Part of the ABC transporter complex MetNIQ involved in methionine import. Responsible for energy coupling to the transport system.</text>
</comment>
<comment type="catalytic activity">
    <reaction evidence="1">
        <text>L-methionine(out) + ATP + H2O = L-methionine(in) + ADP + phosphate + H(+)</text>
        <dbReference type="Rhea" id="RHEA:29779"/>
        <dbReference type="ChEBI" id="CHEBI:15377"/>
        <dbReference type="ChEBI" id="CHEBI:15378"/>
        <dbReference type="ChEBI" id="CHEBI:30616"/>
        <dbReference type="ChEBI" id="CHEBI:43474"/>
        <dbReference type="ChEBI" id="CHEBI:57844"/>
        <dbReference type="ChEBI" id="CHEBI:456216"/>
        <dbReference type="EC" id="7.4.2.11"/>
    </reaction>
</comment>
<comment type="catalytic activity">
    <reaction evidence="1">
        <text>D-methionine(out) + ATP + H2O = D-methionine(in) + ADP + phosphate + H(+)</text>
        <dbReference type="Rhea" id="RHEA:29767"/>
        <dbReference type="ChEBI" id="CHEBI:15377"/>
        <dbReference type="ChEBI" id="CHEBI:15378"/>
        <dbReference type="ChEBI" id="CHEBI:30616"/>
        <dbReference type="ChEBI" id="CHEBI:43474"/>
        <dbReference type="ChEBI" id="CHEBI:57932"/>
        <dbReference type="ChEBI" id="CHEBI:456216"/>
        <dbReference type="EC" id="7.4.2.11"/>
    </reaction>
</comment>
<comment type="subunit">
    <text evidence="1">The complex is composed of two ATP-binding proteins (MetN), two transmembrane proteins (MetI) and a solute-binding protein (MetQ).</text>
</comment>
<comment type="subcellular location">
    <subcellularLocation>
        <location evidence="1">Cell membrane</location>
        <topology evidence="1">Peripheral membrane protein</topology>
    </subcellularLocation>
</comment>
<comment type="similarity">
    <text evidence="1">Belongs to the ABC transporter superfamily. Methionine importer (TC 3.A.1.24) family.</text>
</comment>
<name>METN_CORJK</name>
<accession>Q4JTG9</accession>
<organism>
    <name type="scientific">Corynebacterium jeikeium (strain K411)</name>
    <dbReference type="NCBI Taxonomy" id="306537"/>
    <lineage>
        <taxon>Bacteria</taxon>
        <taxon>Bacillati</taxon>
        <taxon>Actinomycetota</taxon>
        <taxon>Actinomycetes</taxon>
        <taxon>Mycobacteriales</taxon>
        <taxon>Corynebacteriaceae</taxon>
        <taxon>Corynebacterium</taxon>
    </lineage>
</organism>
<evidence type="ECO:0000255" key="1">
    <source>
        <dbReference type="HAMAP-Rule" id="MF_01719"/>
    </source>
</evidence>
<evidence type="ECO:0000256" key="2">
    <source>
        <dbReference type="SAM" id="MobiDB-lite"/>
    </source>
</evidence>